<protein>
    <recommendedName>
        <fullName evidence="1">Gamma-glutamyl phosphate reductase</fullName>
        <shortName evidence="1">GPR</shortName>
        <ecNumber evidence="1">1.2.1.41</ecNumber>
    </recommendedName>
    <alternativeName>
        <fullName evidence="1">Glutamate-5-semialdehyde dehydrogenase</fullName>
    </alternativeName>
    <alternativeName>
        <fullName evidence="1">Glutamyl-gamma-semialdehyde dehydrogenase</fullName>
        <shortName evidence="1">GSA dehydrogenase</shortName>
    </alternativeName>
</protein>
<dbReference type="EC" id="1.2.1.41" evidence="1"/>
<dbReference type="EMBL" id="CP000927">
    <property type="protein sequence ID" value="ABZ73837.1"/>
    <property type="status" value="ALT_INIT"/>
    <property type="molecule type" value="Genomic_DNA"/>
</dbReference>
<dbReference type="SMR" id="B0T315"/>
<dbReference type="STRING" id="366602.Caul_4717"/>
<dbReference type="KEGG" id="cak:Caul_4717"/>
<dbReference type="eggNOG" id="COG0014">
    <property type="taxonomic scope" value="Bacteria"/>
</dbReference>
<dbReference type="HOGENOM" id="CLU_030231_0_0_5"/>
<dbReference type="UniPathway" id="UPA00098">
    <property type="reaction ID" value="UER00360"/>
</dbReference>
<dbReference type="GO" id="GO:0005737">
    <property type="term" value="C:cytoplasm"/>
    <property type="evidence" value="ECO:0007669"/>
    <property type="project" value="UniProtKB-SubCell"/>
</dbReference>
<dbReference type="GO" id="GO:0004350">
    <property type="term" value="F:glutamate-5-semialdehyde dehydrogenase activity"/>
    <property type="evidence" value="ECO:0007669"/>
    <property type="project" value="UniProtKB-UniRule"/>
</dbReference>
<dbReference type="GO" id="GO:0050661">
    <property type="term" value="F:NADP binding"/>
    <property type="evidence" value="ECO:0007669"/>
    <property type="project" value="InterPro"/>
</dbReference>
<dbReference type="GO" id="GO:0055129">
    <property type="term" value="P:L-proline biosynthetic process"/>
    <property type="evidence" value="ECO:0007669"/>
    <property type="project" value="UniProtKB-UniRule"/>
</dbReference>
<dbReference type="CDD" id="cd07079">
    <property type="entry name" value="ALDH_F18-19_ProA-GPR"/>
    <property type="match status" value="1"/>
</dbReference>
<dbReference type="FunFam" id="3.40.309.10:FF:000006">
    <property type="entry name" value="Gamma-glutamyl phosphate reductase"/>
    <property type="match status" value="1"/>
</dbReference>
<dbReference type="Gene3D" id="3.40.605.10">
    <property type="entry name" value="Aldehyde Dehydrogenase, Chain A, domain 1"/>
    <property type="match status" value="1"/>
</dbReference>
<dbReference type="Gene3D" id="3.40.309.10">
    <property type="entry name" value="Aldehyde Dehydrogenase, Chain A, domain 2"/>
    <property type="match status" value="1"/>
</dbReference>
<dbReference type="HAMAP" id="MF_00412">
    <property type="entry name" value="ProA"/>
    <property type="match status" value="1"/>
</dbReference>
<dbReference type="InterPro" id="IPR016161">
    <property type="entry name" value="Ald_DH/histidinol_DH"/>
</dbReference>
<dbReference type="InterPro" id="IPR016163">
    <property type="entry name" value="Ald_DH_C"/>
</dbReference>
<dbReference type="InterPro" id="IPR016162">
    <property type="entry name" value="Ald_DH_N"/>
</dbReference>
<dbReference type="InterPro" id="IPR015590">
    <property type="entry name" value="Aldehyde_DH_dom"/>
</dbReference>
<dbReference type="InterPro" id="IPR020593">
    <property type="entry name" value="G-glutamylP_reductase_CS"/>
</dbReference>
<dbReference type="InterPro" id="IPR012134">
    <property type="entry name" value="Glu-5-SA_DH"/>
</dbReference>
<dbReference type="InterPro" id="IPR000965">
    <property type="entry name" value="GPR_dom"/>
</dbReference>
<dbReference type="NCBIfam" id="NF001221">
    <property type="entry name" value="PRK00197.1"/>
    <property type="match status" value="1"/>
</dbReference>
<dbReference type="NCBIfam" id="TIGR00407">
    <property type="entry name" value="proA"/>
    <property type="match status" value="1"/>
</dbReference>
<dbReference type="PANTHER" id="PTHR11063:SF8">
    <property type="entry name" value="DELTA-1-PYRROLINE-5-CARBOXYLATE SYNTHASE"/>
    <property type="match status" value="1"/>
</dbReference>
<dbReference type="PANTHER" id="PTHR11063">
    <property type="entry name" value="GLUTAMATE SEMIALDEHYDE DEHYDROGENASE"/>
    <property type="match status" value="1"/>
</dbReference>
<dbReference type="Pfam" id="PF00171">
    <property type="entry name" value="Aldedh"/>
    <property type="match status" value="2"/>
</dbReference>
<dbReference type="PIRSF" id="PIRSF000151">
    <property type="entry name" value="GPR"/>
    <property type="match status" value="1"/>
</dbReference>
<dbReference type="SUPFAM" id="SSF53720">
    <property type="entry name" value="ALDH-like"/>
    <property type="match status" value="1"/>
</dbReference>
<dbReference type="PROSITE" id="PS01223">
    <property type="entry name" value="PROA"/>
    <property type="match status" value="1"/>
</dbReference>
<gene>
    <name evidence="1" type="primary">proA</name>
    <name type="ordered locus">Caul_4717</name>
</gene>
<reference key="1">
    <citation type="submission" date="2008-01" db="EMBL/GenBank/DDBJ databases">
        <title>Complete sequence of chromosome of Caulobacter sp. K31.</title>
        <authorList>
            <consortium name="US DOE Joint Genome Institute"/>
            <person name="Copeland A."/>
            <person name="Lucas S."/>
            <person name="Lapidus A."/>
            <person name="Barry K."/>
            <person name="Glavina del Rio T."/>
            <person name="Dalin E."/>
            <person name="Tice H."/>
            <person name="Pitluck S."/>
            <person name="Bruce D."/>
            <person name="Goodwin L."/>
            <person name="Thompson L.S."/>
            <person name="Brettin T."/>
            <person name="Detter J.C."/>
            <person name="Han C."/>
            <person name="Schmutz J."/>
            <person name="Larimer F."/>
            <person name="Land M."/>
            <person name="Hauser L."/>
            <person name="Kyrpides N."/>
            <person name="Kim E."/>
            <person name="Stephens C."/>
            <person name="Richardson P."/>
        </authorList>
    </citation>
    <scope>NUCLEOTIDE SEQUENCE [LARGE SCALE GENOMIC DNA]</scope>
    <source>
        <strain>K31</strain>
    </source>
</reference>
<keyword id="KW-0028">Amino-acid biosynthesis</keyword>
<keyword id="KW-0963">Cytoplasm</keyword>
<keyword id="KW-0521">NADP</keyword>
<keyword id="KW-0560">Oxidoreductase</keyword>
<keyword id="KW-0641">Proline biosynthesis</keyword>
<accession>B0T315</accession>
<organism>
    <name type="scientific">Caulobacter sp. (strain K31)</name>
    <dbReference type="NCBI Taxonomy" id="366602"/>
    <lineage>
        <taxon>Bacteria</taxon>
        <taxon>Pseudomonadati</taxon>
        <taxon>Pseudomonadota</taxon>
        <taxon>Alphaproteobacteria</taxon>
        <taxon>Caulobacterales</taxon>
        <taxon>Caulobacteraceae</taxon>
        <taxon>Caulobacter</taxon>
    </lineage>
</organism>
<evidence type="ECO:0000255" key="1">
    <source>
        <dbReference type="HAMAP-Rule" id="MF_00412"/>
    </source>
</evidence>
<evidence type="ECO:0000305" key="2"/>
<comment type="function">
    <text evidence="1">Catalyzes the NADPH-dependent reduction of L-glutamate 5-phosphate into L-glutamate 5-semialdehyde and phosphate. The product spontaneously undergoes cyclization to form 1-pyrroline-5-carboxylate.</text>
</comment>
<comment type="catalytic activity">
    <reaction evidence="1">
        <text>L-glutamate 5-semialdehyde + phosphate + NADP(+) = L-glutamyl 5-phosphate + NADPH + H(+)</text>
        <dbReference type="Rhea" id="RHEA:19541"/>
        <dbReference type="ChEBI" id="CHEBI:15378"/>
        <dbReference type="ChEBI" id="CHEBI:43474"/>
        <dbReference type="ChEBI" id="CHEBI:57783"/>
        <dbReference type="ChEBI" id="CHEBI:58066"/>
        <dbReference type="ChEBI" id="CHEBI:58274"/>
        <dbReference type="ChEBI" id="CHEBI:58349"/>
        <dbReference type="EC" id="1.2.1.41"/>
    </reaction>
</comment>
<comment type="pathway">
    <text evidence="1">Amino-acid biosynthesis; L-proline biosynthesis; L-glutamate 5-semialdehyde from L-glutamate: step 2/2.</text>
</comment>
<comment type="subcellular location">
    <subcellularLocation>
        <location evidence="1">Cytoplasm</location>
    </subcellularLocation>
</comment>
<comment type="similarity">
    <text evidence="1">Belongs to the gamma-glutamyl phosphate reductase family.</text>
</comment>
<comment type="sequence caution" evidence="2">
    <conflict type="erroneous initiation">
        <sequence resource="EMBL-CDS" id="ABZ73837"/>
    </conflict>
</comment>
<sequence length="419" mass="43111">MSLQATMTAMGQAARQGASALRVATPAQRTAALHAMAAAIRADAPAILAANAKDLEKAGAGGLTAPMVERLMLNPERLEDVAAGVEAVAAIPDPLGVETARWTRPNGLDIARVRTPIGVIAMIFESRPNVTADAAALCVRSGNAVILRGGSECIHSNLAIHAAIAKGLKAAGISSDAVQIVRTPDRDAVGAILGGLNRTIDLIIPRGGKSLVARVQAEARVAVLGHLEGLNHVFVHAAADPRKAVEIVLNAKMRRVSVCGSAETLLVDRAAAERLLPPIADALIKAGCELRGDGPSRAIEPTMKPAVEADWSTEYLAPVISVAVVDGVEGAAAHIAAYGSGHTDAIVTEDVAAAERFIALVDSAIVLVNASTQFADGGEFGFGAEIGIATDKLHARGPVGAEQLTTFKYVVRGTGQTRP</sequence>
<proteinExistence type="inferred from homology"/>
<feature type="chain" id="PRO_0000340876" description="Gamma-glutamyl phosphate reductase">
    <location>
        <begin position="1"/>
        <end position="419"/>
    </location>
</feature>
<name>PROA_CAUSK</name>